<gene>
    <name evidence="1" type="primary">dapB</name>
    <name type="ordered locus">cu0860</name>
</gene>
<feature type="chain" id="PRO_1000093960" description="4-hydroxy-tetrahydrodipicolinate reductase">
    <location>
        <begin position="1"/>
        <end position="248"/>
    </location>
</feature>
<feature type="active site" description="Proton donor/acceptor" evidence="1">
    <location>
        <position position="133"/>
    </location>
</feature>
<feature type="active site" description="Proton donor" evidence="1">
    <location>
        <position position="137"/>
    </location>
</feature>
<feature type="binding site" evidence="1">
    <location>
        <begin position="8"/>
        <end position="13"/>
    </location>
    <ligand>
        <name>NAD(+)</name>
        <dbReference type="ChEBI" id="CHEBI:57540"/>
    </ligand>
</feature>
<feature type="binding site" evidence="1">
    <location>
        <position position="34"/>
    </location>
    <ligand>
        <name>NAD(+)</name>
        <dbReference type="ChEBI" id="CHEBI:57540"/>
    </ligand>
</feature>
<feature type="binding site" evidence="1">
    <location>
        <begin position="76"/>
        <end position="78"/>
    </location>
    <ligand>
        <name>NAD(+)</name>
        <dbReference type="ChEBI" id="CHEBI:57540"/>
    </ligand>
</feature>
<feature type="binding site" evidence="1">
    <location>
        <begin position="103"/>
        <end position="106"/>
    </location>
    <ligand>
        <name>NAD(+)</name>
        <dbReference type="ChEBI" id="CHEBI:57540"/>
    </ligand>
</feature>
<feature type="binding site" evidence="1">
    <location>
        <position position="134"/>
    </location>
    <ligand>
        <name>(S)-2,3,4,5-tetrahydrodipicolinate</name>
        <dbReference type="ChEBI" id="CHEBI:16845"/>
    </ligand>
</feature>
<feature type="binding site" evidence="1">
    <location>
        <begin position="143"/>
        <end position="144"/>
    </location>
    <ligand>
        <name>(S)-2,3,4,5-tetrahydrodipicolinate</name>
        <dbReference type="ChEBI" id="CHEBI:16845"/>
    </ligand>
</feature>
<protein>
    <recommendedName>
        <fullName evidence="1">4-hydroxy-tetrahydrodipicolinate reductase</fullName>
        <shortName evidence="1">HTPA reductase</shortName>
        <ecNumber evidence="1">1.17.1.8</ecNumber>
    </recommendedName>
</protein>
<reference key="1">
    <citation type="journal article" date="2008" name="J. Biotechnol.">
        <title>The lifestyle of Corynebacterium urealyticum derived from its complete genome sequence established by pyrosequencing.</title>
        <authorList>
            <person name="Tauch A."/>
            <person name="Trost E."/>
            <person name="Tilker A."/>
            <person name="Ludewig U."/>
            <person name="Schneiker S."/>
            <person name="Goesmann A."/>
            <person name="Arnold W."/>
            <person name="Bekel T."/>
            <person name="Brinkrolf K."/>
            <person name="Brune I."/>
            <person name="Goetker S."/>
            <person name="Kalinowski J."/>
            <person name="Kamp P.-B."/>
            <person name="Lobo F.P."/>
            <person name="Viehoever P."/>
            <person name="Weisshaar B."/>
            <person name="Soriano F."/>
            <person name="Droege M."/>
            <person name="Puehler A."/>
        </authorList>
    </citation>
    <scope>NUCLEOTIDE SEQUENCE [LARGE SCALE GENOMIC DNA]</scope>
    <source>
        <strain>ATCC 43042 / DSM 7109</strain>
    </source>
</reference>
<proteinExistence type="inferred from homology"/>
<keyword id="KW-0028">Amino-acid biosynthesis</keyword>
<keyword id="KW-0963">Cytoplasm</keyword>
<keyword id="KW-0220">Diaminopimelate biosynthesis</keyword>
<keyword id="KW-0457">Lysine biosynthesis</keyword>
<keyword id="KW-0520">NAD</keyword>
<keyword id="KW-0521">NADP</keyword>
<keyword id="KW-0560">Oxidoreductase</keyword>
<keyword id="KW-1185">Reference proteome</keyword>
<comment type="function">
    <text evidence="1">Catalyzes the conversion of 4-hydroxy-tetrahydrodipicolinate (HTPA) to tetrahydrodipicolinate.</text>
</comment>
<comment type="catalytic activity">
    <reaction evidence="1">
        <text>(S)-2,3,4,5-tetrahydrodipicolinate + NAD(+) + H2O = (2S,4S)-4-hydroxy-2,3,4,5-tetrahydrodipicolinate + NADH + H(+)</text>
        <dbReference type="Rhea" id="RHEA:35323"/>
        <dbReference type="ChEBI" id="CHEBI:15377"/>
        <dbReference type="ChEBI" id="CHEBI:15378"/>
        <dbReference type="ChEBI" id="CHEBI:16845"/>
        <dbReference type="ChEBI" id="CHEBI:57540"/>
        <dbReference type="ChEBI" id="CHEBI:57945"/>
        <dbReference type="ChEBI" id="CHEBI:67139"/>
        <dbReference type="EC" id="1.17.1.8"/>
    </reaction>
</comment>
<comment type="catalytic activity">
    <reaction evidence="1">
        <text>(S)-2,3,4,5-tetrahydrodipicolinate + NADP(+) + H2O = (2S,4S)-4-hydroxy-2,3,4,5-tetrahydrodipicolinate + NADPH + H(+)</text>
        <dbReference type="Rhea" id="RHEA:35331"/>
        <dbReference type="ChEBI" id="CHEBI:15377"/>
        <dbReference type="ChEBI" id="CHEBI:15378"/>
        <dbReference type="ChEBI" id="CHEBI:16845"/>
        <dbReference type="ChEBI" id="CHEBI:57783"/>
        <dbReference type="ChEBI" id="CHEBI:58349"/>
        <dbReference type="ChEBI" id="CHEBI:67139"/>
        <dbReference type="EC" id="1.17.1.8"/>
    </reaction>
</comment>
<comment type="pathway">
    <text evidence="1">Amino-acid biosynthesis; L-lysine biosynthesis via DAP pathway; (S)-tetrahydrodipicolinate from L-aspartate: step 4/4.</text>
</comment>
<comment type="subcellular location">
    <subcellularLocation>
        <location evidence="1">Cytoplasm</location>
    </subcellularLocation>
</comment>
<comment type="similarity">
    <text evidence="1">Belongs to the DapB family.</text>
</comment>
<comment type="caution">
    <text evidence="2">Was originally thought to be a dihydrodipicolinate reductase (DHDPR), catalyzing the conversion of dihydrodipicolinate to tetrahydrodipicolinate. However, it was shown in E.coli that the substrate of the enzymatic reaction is not dihydrodipicolinate (DHDP) but in fact (2S,4S)-4-hydroxy-2,3,4,5-tetrahydrodipicolinic acid (HTPA), the product released by the DapA-catalyzed reaction.</text>
</comment>
<accession>B1VDC2</accession>
<evidence type="ECO:0000255" key="1">
    <source>
        <dbReference type="HAMAP-Rule" id="MF_00102"/>
    </source>
</evidence>
<evidence type="ECO:0000305" key="2"/>
<dbReference type="EC" id="1.17.1.8" evidence="1"/>
<dbReference type="EMBL" id="AM942444">
    <property type="protein sequence ID" value="CAQ04820.1"/>
    <property type="molecule type" value="Genomic_DNA"/>
</dbReference>
<dbReference type="RefSeq" id="WP_012360109.1">
    <property type="nucleotide sequence ID" value="NC_010545.1"/>
</dbReference>
<dbReference type="SMR" id="B1VDC2"/>
<dbReference type="STRING" id="504474.cu0860"/>
<dbReference type="GeneID" id="60603636"/>
<dbReference type="KEGG" id="cur:cu0860"/>
<dbReference type="eggNOG" id="COG0289">
    <property type="taxonomic scope" value="Bacteria"/>
</dbReference>
<dbReference type="HOGENOM" id="CLU_047479_0_1_11"/>
<dbReference type="UniPathway" id="UPA00034">
    <property type="reaction ID" value="UER00018"/>
</dbReference>
<dbReference type="Proteomes" id="UP000001727">
    <property type="component" value="Chromosome"/>
</dbReference>
<dbReference type="GO" id="GO:0005829">
    <property type="term" value="C:cytosol"/>
    <property type="evidence" value="ECO:0007669"/>
    <property type="project" value="TreeGrafter"/>
</dbReference>
<dbReference type="GO" id="GO:0008839">
    <property type="term" value="F:4-hydroxy-tetrahydrodipicolinate reductase"/>
    <property type="evidence" value="ECO:0007669"/>
    <property type="project" value="UniProtKB-EC"/>
</dbReference>
<dbReference type="GO" id="GO:0051287">
    <property type="term" value="F:NAD binding"/>
    <property type="evidence" value="ECO:0007669"/>
    <property type="project" value="UniProtKB-UniRule"/>
</dbReference>
<dbReference type="GO" id="GO:0050661">
    <property type="term" value="F:NADP binding"/>
    <property type="evidence" value="ECO:0007669"/>
    <property type="project" value="UniProtKB-UniRule"/>
</dbReference>
<dbReference type="GO" id="GO:0016726">
    <property type="term" value="F:oxidoreductase activity, acting on CH or CH2 groups, NAD or NADP as acceptor"/>
    <property type="evidence" value="ECO:0007669"/>
    <property type="project" value="UniProtKB-UniRule"/>
</dbReference>
<dbReference type="GO" id="GO:0019877">
    <property type="term" value="P:diaminopimelate biosynthetic process"/>
    <property type="evidence" value="ECO:0007669"/>
    <property type="project" value="UniProtKB-UniRule"/>
</dbReference>
<dbReference type="GO" id="GO:0009089">
    <property type="term" value="P:lysine biosynthetic process via diaminopimelate"/>
    <property type="evidence" value="ECO:0007669"/>
    <property type="project" value="UniProtKB-UniRule"/>
</dbReference>
<dbReference type="CDD" id="cd02274">
    <property type="entry name" value="DHDPR_N"/>
    <property type="match status" value="1"/>
</dbReference>
<dbReference type="FunFam" id="3.30.360.10:FF:000009">
    <property type="entry name" value="4-hydroxy-tetrahydrodipicolinate reductase"/>
    <property type="match status" value="1"/>
</dbReference>
<dbReference type="Gene3D" id="3.30.360.10">
    <property type="entry name" value="Dihydrodipicolinate Reductase, domain 2"/>
    <property type="match status" value="1"/>
</dbReference>
<dbReference type="Gene3D" id="3.40.50.720">
    <property type="entry name" value="NAD(P)-binding Rossmann-like Domain"/>
    <property type="match status" value="1"/>
</dbReference>
<dbReference type="HAMAP" id="MF_00102">
    <property type="entry name" value="DapB"/>
    <property type="match status" value="1"/>
</dbReference>
<dbReference type="InterPro" id="IPR022663">
    <property type="entry name" value="DapB_C"/>
</dbReference>
<dbReference type="InterPro" id="IPR000846">
    <property type="entry name" value="DapB_N"/>
</dbReference>
<dbReference type="InterPro" id="IPR022664">
    <property type="entry name" value="DapB_N_CS"/>
</dbReference>
<dbReference type="InterPro" id="IPR023940">
    <property type="entry name" value="DHDPR_bac"/>
</dbReference>
<dbReference type="InterPro" id="IPR036291">
    <property type="entry name" value="NAD(P)-bd_dom_sf"/>
</dbReference>
<dbReference type="NCBIfam" id="TIGR00036">
    <property type="entry name" value="dapB"/>
    <property type="match status" value="1"/>
</dbReference>
<dbReference type="PANTHER" id="PTHR20836:SF0">
    <property type="entry name" value="4-HYDROXY-TETRAHYDRODIPICOLINATE REDUCTASE 1, CHLOROPLASTIC-RELATED"/>
    <property type="match status" value="1"/>
</dbReference>
<dbReference type="PANTHER" id="PTHR20836">
    <property type="entry name" value="DIHYDRODIPICOLINATE REDUCTASE"/>
    <property type="match status" value="1"/>
</dbReference>
<dbReference type="Pfam" id="PF05173">
    <property type="entry name" value="DapB_C"/>
    <property type="match status" value="1"/>
</dbReference>
<dbReference type="Pfam" id="PF01113">
    <property type="entry name" value="DapB_N"/>
    <property type="match status" value="1"/>
</dbReference>
<dbReference type="PIRSF" id="PIRSF000161">
    <property type="entry name" value="DHPR"/>
    <property type="match status" value="1"/>
</dbReference>
<dbReference type="SUPFAM" id="SSF55347">
    <property type="entry name" value="Glyceraldehyde-3-phosphate dehydrogenase-like, C-terminal domain"/>
    <property type="match status" value="1"/>
</dbReference>
<dbReference type="SUPFAM" id="SSF51735">
    <property type="entry name" value="NAD(P)-binding Rossmann-fold domains"/>
    <property type="match status" value="1"/>
</dbReference>
<dbReference type="PROSITE" id="PS01298">
    <property type="entry name" value="DAPB"/>
    <property type="match status" value="1"/>
</dbReference>
<name>DAPB_CORU7</name>
<organism>
    <name type="scientific">Corynebacterium urealyticum (strain ATCC 43042 / DSM 7109)</name>
    <dbReference type="NCBI Taxonomy" id="504474"/>
    <lineage>
        <taxon>Bacteria</taxon>
        <taxon>Bacillati</taxon>
        <taxon>Actinomycetota</taxon>
        <taxon>Actinomycetes</taxon>
        <taxon>Mycobacteriales</taxon>
        <taxon>Corynebacteriaceae</taxon>
        <taxon>Corynebacterium</taxon>
    </lineage>
</organism>
<sequence>MIRVGVLGAKGRVGTTIVAEVEQNPNLELSAALDHGDDLQELVDAKTDVVVDFTQPDSVMSNVEFCIRNGIHAVIGTTGWTEERYETVRSLLQDSPKVGVLVAPNFAISAVLTMKFAEIAAPFFESAEVIEFHHPNKLDAPSGTAVHTAEGIARARREAGLEEQPDATAQSLDGARGSDVQGVPVHAVRMTGMVAHEEVIFGTRGQSLTIRQDSYDRESFVPGVVIGVEKIADNPGLTIGLEKFLGLD</sequence>